<protein>
    <recommendedName>
        <fullName evidence="15">Sodium-coupled neutral amino acid transporter 4</fullName>
    </recommendedName>
    <alternativeName>
        <fullName>Amino acid transporter A3</fullName>
    </alternativeName>
    <alternativeName>
        <fullName>Na(+)-coupled neutral amino acid transporter 4</fullName>
    </alternativeName>
    <alternativeName>
        <fullName>Solute carrier family 38 member 4</fullName>
    </alternativeName>
    <alternativeName>
        <fullName>System A amino acid transporter 3</fullName>
    </alternativeName>
    <alternativeName>
        <fullName>System N amino acid transporter 3</fullName>
    </alternativeName>
</protein>
<dbReference type="EMBL" id="AF305814">
    <property type="protein sequence ID" value="AAK43528.1"/>
    <property type="molecule type" value="mRNA"/>
</dbReference>
<dbReference type="EMBL" id="AF193836">
    <property type="protein sequence ID" value="AAK71508.1"/>
    <property type="molecule type" value="mRNA"/>
</dbReference>
<dbReference type="EMBL" id="AB055003">
    <property type="protein sequence ID" value="BAB84090.1"/>
    <property type="molecule type" value="mRNA"/>
</dbReference>
<dbReference type="EMBL" id="AK291168">
    <property type="protein sequence ID" value="BAF83857.1"/>
    <property type="molecule type" value="mRNA"/>
</dbReference>
<dbReference type="EMBL" id="CH471111">
    <property type="protein sequence ID" value="EAW57919.1"/>
    <property type="molecule type" value="Genomic_DNA"/>
</dbReference>
<dbReference type="EMBL" id="BC069819">
    <property type="protein sequence ID" value="AAH69819.1"/>
    <property type="molecule type" value="mRNA"/>
</dbReference>
<dbReference type="EMBL" id="BC101827">
    <property type="protein sequence ID" value="AAI01828.1"/>
    <property type="molecule type" value="mRNA"/>
</dbReference>
<dbReference type="EMBL" id="BC104913">
    <property type="protein sequence ID" value="AAI04914.1"/>
    <property type="molecule type" value="mRNA"/>
</dbReference>
<dbReference type="CCDS" id="CCDS8750.1"/>
<dbReference type="RefSeq" id="NP_001137296.1">
    <property type="nucleotide sequence ID" value="NM_001143824.2"/>
</dbReference>
<dbReference type="RefSeq" id="NP_060488.2">
    <property type="nucleotide sequence ID" value="NM_018018.4"/>
</dbReference>
<dbReference type="RefSeq" id="XP_005269054.1">
    <property type="nucleotide sequence ID" value="XM_005268997.3"/>
</dbReference>
<dbReference type="RefSeq" id="XP_054228358.1">
    <property type="nucleotide sequence ID" value="XM_054372383.1"/>
</dbReference>
<dbReference type="RefSeq" id="XP_054228359.1">
    <property type="nucleotide sequence ID" value="XM_054372384.1"/>
</dbReference>
<dbReference type="RefSeq" id="XP_054228360.1">
    <property type="nucleotide sequence ID" value="XM_054372385.1"/>
</dbReference>
<dbReference type="SMR" id="Q969I6"/>
<dbReference type="BioGRID" id="120402">
    <property type="interactions" value="2"/>
</dbReference>
<dbReference type="FunCoup" id="Q969I6">
    <property type="interactions" value="43"/>
</dbReference>
<dbReference type="IntAct" id="Q969I6">
    <property type="interactions" value="1"/>
</dbReference>
<dbReference type="STRING" id="9606.ENSP00000266579"/>
<dbReference type="DrugBank" id="DB00174">
    <property type="generic name" value="Asparagine"/>
</dbReference>
<dbReference type="TCDB" id="2.A.18.6.17">
    <property type="family name" value="the amino acid/auxin permease (aaap) family"/>
</dbReference>
<dbReference type="GlyCosmos" id="Q969I6">
    <property type="glycosylation" value="3 sites, No reported glycans"/>
</dbReference>
<dbReference type="GlyGen" id="Q969I6">
    <property type="glycosylation" value="3 sites"/>
</dbReference>
<dbReference type="iPTMnet" id="Q969I6"/>
<dbReference type="PhosphoSitePlus" id="Q969I6"/>
<dbReference type="BioMuta" id="SLC38A4"/>
<dbReference type="DMDM" id="74731046"/>
<dbReference type="jPOST" id="Q969I6"/>
<dbReference type="MassIVE" id="Q969I6"/>
<dbReference type="PaxDb" id="9606-ENSP00000389843"/>
<dbReference type="PeptideAtlas" id="Q969I6"/>
<dbReference type="ProteomicsDB" id="75771"/>
<dbReference type="Antibodypedia" id="13384">
    <property type="antibodies" value="47 antibodies from 21 providers"/>
</dbReference>
<dbReference type="DNASU" id="55089"/>
<dbReference type="Ensembl" id="ENST00000266579.9">
    <property type="protein sequence ID" value="ENSP00000266579.4"/>
    <property type="gene ID" value="ENSG00000139209.16"/>
</dbReference>
<dbReference type="Ensembl" id="ENST00000447411.5">
    <property type="protein sequence ID" value="ENSP00000389843.1"/>
    <property type="gene ID" value="ENSG00000139209.16"/>
</dbReference>
<dbReference type="GeneID" id="55089"/>
<dbReference type="KEGG" id="hsa:55089"/>
<dbReference type="MANE-Select" id="ENST00000266579.9">
    <property type="protein sequence ID" value="ENSP00000266579.4"/>
    <property type="RefSeq nucleotide sequence ID" value="NM_018018.5"/>
    <property type="RefSeq protein sequence ID" value="NP_060488.2"/>
</dbReference>
<dbReference type="UCSC" id="uc001rpi.3">
    <property type="organism name" value="human"/>
</dbReference>
<dbReference type="AGR" id="HGNC:14679"/>
<dbReference type="CTD" id="55089"/>
<dbReference type="DisGeNET" id="55089"/>
<dbReference type="GeneCards" id="SLC38A4"/>
<dbReference type="HGNC" id="HGNC:14679">
    <property type="gene designation" value="SLC38A4"/>
</dbReference>
<dbReference type="HPA" id="ENSG00000139209">
    <property type="expression patterns" value="Tissue enriched (liver)"/>
</dbReference>
<dbReference type="MIM" id="608065">
    <property type="type" value="gene"/>
</dbReference>
<dbReference type="neXtProt" id="NX_Q969I6"/>
<dbReference type="OpenTargets" id="ENSG00000139209"/>
<dbReference type="PharmGKB" id="PA37908"/>
<dbReference type="VEuPathDB" id="HostDB:ENSG00000139209"/>
<dbReference type="eggNOG" id="KOG1305">
    <property type="taxonomic scope" value="Eukaryota"/>
</dbReference>
<dbReference type="GeneTree" id="ENSGT00940000158917"/>
<dbReference type="HOGENOM" id="CLU_009020_0_1_1"/>
<dbReference type="InParanoid" id="Q969I6"/>
<dbReference type="OMA" id="QFANDDA"/>
<dbReference type="OrthoDB" id="655540at2759"/>
<dbReference type="PAN-GO" id="Q969I6">
    <property type="GO annotations" value="3 GO annotations based on evolutionary models"/>
</dbReference>
<dbReference type="PhylomeDB" id="Q969I6"/>
<dbReference type="TreeFam" id="TF328787"/>
<dbReference type="PathwayCommons" id="Q969I6"/>
<dbReference type="Reactome" id="R-HSA-352230">
    <property type="pathway name" value="Amino acid transport across the plasma membrane"/>
</dbReference>
<dbReference type="SignaLink" id="Q969I6"/>
<dbReference type="BioGRID-ORCS" id="55089">
    <property type="hits" value="17 hits in 1149 CRISPR screens"/>
</dbReference>
<dbReference type="ChiTaRS" id="SLC38A4">
    <property type="organism name" value="human"/>
</dbReference>
<dbReference type="GenomeRNAi" id="55089"/>
<dbReference type="Pharos" id="Q969I6">
    <property type="development level" value="Tbio"/>
</dbReference>
<dbReference type="PRO" id="PR:Q969I6"/>
<dbReference type="Proteomes" id="UP000005640">
    <property type="component" value="Chromosome 12"/>
</dbReference>
<dbReference type="RNAct" id="Q969I6">
    <property type="molecule type" value="protein"/>
</dbReference>
<dbReference type="Bgee" id="ENSG00000139209">
    <property type="expression patterns" value="Expressed in right lobe of liver and 106 other cell types or tissues"/>
</dbReference>
<dbReference type="ExpressionAtlas" id="Q969I6">
    <property type="expression patterns" value="baseline and differential"/>
</dbReference>
<dbReference type="GO" id="GO:0031528">
    <property type="term" value="C:microvillus membrane"/>
    <property type="evidence" value="ECO:0000314"/>
    <property type="project" value="UniProtKB"/>
</dbReference>
<dbReference type="GO" id="GO:0005886">
    <property type="term" value="C:plasma membrane"/>
    <property type="evidence" value="ECO:0000318"/>
    <property type="project" value="GO_Central"/>
</dbReference>
<dbReference type="GO" id="GO:0015655">
    <property type="term" value="F:alanine:sodium symporter activity"/>
    <property type="evidence" value="ECO:0000314"/>
    <property type="project" value="UniProtKB"/>
</dbReference>
<dbReference type="GO" id="GO:0015171">
    <property type="term" value="F:amino acid transmembrane transporter activity"/>
    <property type="evidence" value="ECO:0000304"/>
    <property type="project" value="Reactome"/>
</dbReference>
<dbReference type="GO" id="GO:0005283">
    <property type="term" value="F:amino acid:sodium symporter activity"/>
    <property type="evidence" value="ECO:0000314"/>
    <property type="project" value="UniProtKB"/>
</dbReference>
<dbReference type="GO" id="GO:0015179">
    <property type="term" value="F:L-amino acid transmembrane transporter activity"/>
    <property type="evidence" value="ECO:0000318"/>
    <property type="project" value="GO_Central"/>
</dbReference>
<dbReference type="GO" id="GO:0061459">
    <property type="term" value="F:L-arginine transmembrane transporter activity"/>
    <property type="evidence" value="ECO:0007669"/>
    <property type="project" value="Ensembl"/>
</dbReference>
<dbReference type="GO" id="GO:0005295">
    <property type="term" value="F:neutral L-amino acid:sodium symporter activity"/>
    <property type="evidence" value="ECO:0000314"/>
    <property type="project" value="UniProtKB"/>
</dbReference>
<dbReference type="GO" id="GO:0003333">
    <property type="term" value="P:amino acid transmembrane transport"/>
    <property type="evidence" value="ECO:0000318"/>
    <property type="project" value="GO_Central"/>
</dbReference>
<dbReference type="GO" id="GO:0006865">
    <property type="term" value="P:amino acid transport"/>
    <property type="evidence" value="ECO:0000304"/>
    <property type="project" value="Reactome"/>
</dbReference>
<dbReference type="GO" id="GO:1904273">
    <property type="term" value="P:L-alanine import across plasma membrane"/>
    <property type="evidence" value="ECO:0000314"/>
    <property type="project" value="UniProtKB"/>
</dbReference>
<dbReference type="GO" id="GO:0015804">
    <property type="term" value="P:neutral amino acid transport"/>
    <property type="evidence" value="ECO:0000314"/>
    <property type="project" value="UniProtKB"/>
</dbReference>
<dbReference type="InterPro" id="IPR013057">
    <property type="entry name" value="AA_transpt_TM"/>
</dbReference>
<dbReference type="PANTHER" id="PTHR22950">
    <property type="entry name" value="AMINO ACID TRANSPORTER"/>
    <property type="match status" value="1"/>
</dbReference>
<dbReference type="PANTHER" id="PTHR22950:SF222">
    <property type="entry name" value="SODIUM-COUPLED NEUTRAL AMINO ACID TRANSPORTER 4"/>
    <property type="match status" value="1"/>
</dbReference>
<dbReference type="Pfam" id="PF01490">
    <property type="entry name" value="Aa_trans"/>
    <property type="match status" value="2"/>
</dbReference>
<name>S38A4_HUMAN</name>
<comment type="function">
    <text evidence="5 6 8 11">Symporter that cotransports neutral amino acids and sodium ions from the extraccellular to the intracellular side of the cell membrane (PubMed:11342143, PubMed:19015196, PubMed:33928121). The transport is electrogenic, pH dependent and partially tolerates substitution of Na(+) by Li(+) (PubMed:11414754). Preferentially transports smaller amino acids, such as glycine, L-alanine, L-serine, L-asparagine and L-threonine, followed by L-cysteine, L-histidine, L-proline and L-glutamine and L-methionine (PubMed:11414754, PubMed:33928121).</text>
</comment>
<comment type="catalytic activity">
    <reaction evidence="11">
        <text>L-methionine(in) + Na(+)(in) = L-methionine(out) + Na(+)(out)</text>
        <dbReference type="Rhea" id="RHEA:68240"/>
        <dbReference type="ChEBI" id="CHEBI:29101"/>
        <dbReference type="ChEBI" id="CHEBI:57844"/>
    </reaction>
    <physiologicalReaction direction="right-to-left" evidence="18">
        <dbReference type="Rhea" id="RHEA:68242"/>
    </physiologicalReaction>
</comment>
<comment type="catalytic activity">
    <reaction evidence="11">
        <text>L-asparagine(in) + Na(+)(in) = L-asparagine(out) + Na(+)(out)</text>
        <dbReference type="Rhea" id="RHEA:71383"/>
        <dbReference type="ChEBI" id="CHEBI:29101"/>
        <dbReference type="ChEBI" id="CHEBI:58048"/>
    </reaction>
    <physiologicalReaction direction="right-to-left" evidence="18">
        <dbReference type="Rhea" id="RHEA:71385"/>
    </physiologicalReaction>
</comment>
<comment type="catalytic activity">
    <reaction evidence="11">
        <text>L-threonine(in) + Na(+)(in) = L-threonine(out) + Na(+)(out)</text>
        <dbReference type="Rhea" id="RHEA:69999"/>
        <dbReference type="ChEBI" id="CHEBI:29101"/>
        <dbReference type="ChEBI" id="CHEBI:57926"/>
    </reaction>
    <physiologicalReaction direction="right-to-left" evidence="18">
        <dbReference type="Rhea" id="RHEA:70001"/>
    </physiologicalReaction>
</comment>
<comment type="catalytic activity">
    <reaction evidence="11">
        <text>L-serine(in) + Na(+)(in) = L-serine(out) + Na(+)(out)</text>
        <dbReference type="Rhea" id="RHEA:29575"/>
        <dbReference type="ChEBI" id="CHEBI:29101"/>
        <dbReference type="ChEBI" id="CHEBI:33384"/>
    </reaction>
    <physiologicalReaction direction="right-to-left" evidence="18">
        <dbReference type="Rhea" id="RHEA:29577"/>
    </physiologicalReaction>
</comment>
<comment type="catalytic activity">
    <reaction evidence="5 11">
        <text>glycine(in) + Na(+)(in) = glycine(out) + Na(+)(out)</text>
        <dbReference type="Rhea" id="RHEA:68228"/>
        <dbReference type="ChEBI" id="CHEBI:29101"/>
        <dbReference type="ChEBI" id="CHEBI:57305"/>
    </reaction>
    <physiologicalReaction direction="right-to-left" evidence="18">
        <dbReference type="Rhea" id="RHEA:68230"/>
    </physiologicalReaction>
</comment>
<comment type="catalytic activity">
    <reaction evidence="6 11">
        <text>L-alanine(in) + Na(+)(in) = L-alanine(out) + Na(+)(out)</text>
        <dbReference type="Rhea" id="RHEA:29283"/>
        <dbReference type="ChEBI" id="CHEBI:29101"/>
        <dbReference type="ChEBI" id="CHEBI:57972"/>
    </reaction>
    <physiologicalReaction direction="right-to-left" evidence="18">
        <dbReference type="Rhea" id="RHEA:29285"/>
    </physiologicalReaction>
</comment>
<comment type="catalytic activity">
    <reaction evidence="6 11">
        <text>L-glutamine(in) + Na(+)(in) = L-glutamine(out) + Na(+)(out)</text>
        <dbReference type="Rhea" id="RHEA:68236"/>
        <dbReference type="ChEBI" id="CHEBI:29101"/>
        <dbReference type="ChEBI" id="CHEBI:58359"/>
    </reaction>
    <physiologicalReaction direction="right-to-left" evidence="18">
        <dbReference type="Rhea" id="RHEA:68238"/>
    </physiologicalReaction>
</comment>
<comment type="catalytic activity">
    <reaction evidence="6 11">
        <text>L-histidine(in) + Na(+)(in) = L-histidine(out) + Na(+)(out)</text>
        <dbReference type="Rhea" id="RHEA:71583"/>
        <dbReference type="ChEBI" id="CHEBI:29101"/>
        <dbReference type="ChEBI" id="CHEBI:57595"/>
    </reaction>
    <physiologicalReaction direction="right-to-left" evidence="18">
        <dbReference type="Rhea" id="RHEA:71585"/>
    </physiologicalReaction>
</comment>
<comment type="catalytic activity">
    <reaction evidence="2">
        <text>L-cysteine(in) + Na(+)(in) = L-cysteine(out) + Na(+)(out)</text>
        <dbReference type="Rhea" id="RHEA:68232"/>
        <dbReference type="ChEBI" id="CHEBI:29101"/>
        <dbReference type="ChEBI" id="CHEBI:35235"/>
    </reaction>
    <physiologicalReaction direction="right-to-left" evidence="2">
        <dbReference type="Rhea" id="RHEA:68234"/>
    </physiologicalReaction>
</comment>
<comment type="catalytic activity">
    <reaction evidence="2">
        <text>L-proline(in) + Na(+)(in) = L-proline(out) + Na(+)(out)</text>
        <dbReference type="Rhea" id="RHEA:28967"/>
        <dbReference type="ChEBI" id="CHEBI:29101"/>
        <dbReference type="ChEBI" id="CHEBI:60039"/>
    </reaction>
    <physiologicalReaction direction="right-to-left" evidence="2">
        <dbReference type="Rhea" id="RHEA:28969"/>
    </physiologicalReaction>
</comment>
<comment type="biophysicochemical properties">
    <kinetics>
        <KM evidence="5">1.6 mM for glycine</KM>
        <KM evidence="5">0.3 mM for L-arginine</KM>
        <KM evidence="6">3.52 mM for L-alanine</KM>
    </kinetics>
    <phDependence>
        <text evidence="5">Optimum pH is 7.5-8.5.</text>
    </phDependence>
</comment>
<comment type="interaction">
    <interactant intactId="EBI-17459810">
        <id>Q969I6</id>
    </interactant>
    <interactant intactId="EBI-17458373">
        <id>P48165</id>
        <label>GJA8</label>
    </interactant>
    <organismsDiffer>false</organismsDiffer>
    <experiments>3</experiments>
</comment>
<comment type="subcellular location">
    <subcellularLocation>
        <location evidence="6 7">Cell membrane</location>
        <topology evidence="6">Multi-pass membrane protein</topology>
    </subcellularLocation>
    <subcellularLocation>
        <location evidence="8">Cell projection</location>
        <location evidence="8">Microvillus membrane</location>
        <topology>Multi-pass membrane protein</topology>
    </subcellularLocation>
    <text evidence="8">Microvillus membrane localization in placenta.</text>
</comment>
<comment type="tissue specificity">
    <text evidence="5 6 7 8">Expressed almost exclusively in embryonic and adult liver, and at lower levels in the kidney (PubMed:11342143, PubMed:11414754). Expressed at lower levels in adult muscle and pancreas (PubMed:11414754). Detected in fetal blood vessels (PubMed:16148032). Expressed in syncytiotrophoblas of placenta during first trimester and at term (PubMed:16148032, PubMed:19015196). Highly expressed in first trimester placenta compared to term placenta (PubMed:19015196).</text>
</comment>
<comment type="PTM">
    <text evidence="1">The disulfide bond plays an important role in substrate transport, but has no effect on trafficking to the cell surface.</text>
</comment>
<comment type="similarity">
    <text evidence="15">Belongs to the amino acid/polyamine transporter 2 family.</text>
</comment>
<comment type="caution">
    <text evidence="5 11 16 18">There is a disagreement about sodium-independent transport of cationic amino acids, such as L-arginine and L-lysine. While Hatanaka et al (PubMed:11342143) shown that SLC38A4 may mediate sodium-independent transport of cationic amino acids, such as L-arginine and L-lysine (PubMed:11342143). Recent studies by Fairweather et al (PubMed:33928121), using quantitative LC-MS analysis, shown any transport activity of cationic amino acids, such as L-arginine and L-lysine (PubMed:33928121).</text>
</comment>
<proteinExistence type="evidence at protein level"/>
<evidence type="ECO:0000250" key="1">
    <source>
        <dbReference type="UniProtKB" id="Q8R1S9"/>
    </source>
</evidence>
<evidence type="ECO:0000250" key="2">
    <source>
        <dbReference type="UniProtKB" id="Q9EQ25"/>
    </source>
</evidence>
<evidence type="ECO:0000255" key="3"/>
<evidence type="ECO:0000256" key="4">
    <source>
        <dbReference type="SAM" id="MobiDB-lite"/>
    </source>
</evidence>
<evidence type="ECO:0000269" key="5">
    <source>
    </source>
</evidence>
<evidence type="ECO:0000269" key="6">
    <source>
    </source>
</evidence>
<evidence type="ECO:0000269" key="7">
    <source>
    </source>
</evidence>
<evidence type="ECO:0000269" key="8">
    <source>
    </source>
</evidence>
<evidence type="ECO:0000269" key="9">
    <source>
    </source>
</evidence>
<evidence type="ECO:0000269" key="10">
    <source>
    </source>
</evidence>
<evidence type="ECO:0000269" key="11">
    <source>
    </source>
</evidence>
<evidence type="ECO:0000303" key="12">
    <source>
    </source>
</evidence>
<evidence type="ECO:0000303" key="13">
    <source>
    </source>
</evidence>
<evidence type="ECO:0000303" key="14">
    <source>
    </source>
</evidence>
<evidence type="ECO:0000305" key="15"/>
<evidence type="ECO:0000305" key="16">
    <source>
    </source>
</evidence>
<evidence type="ECO:0000305" key="17">
    <source>
    </source>
</evidence>
<evidence type="ECO:0000305" key="18">
    <source>
    </source>
</evidence>
<evidence type="ECO:0000312" key="19">
    <source>
        <dbReference type="HGNC" id="HGNC:14679"/>
    </source>
</evidence>
<organism>
    <name type="scientific">Homo sapiens</name>
    <name type="common">Human</name>
    <dbReference type="NCBI Taxonomy" id="9606"/>
    <lineage>
        <taxon>Eukaryota</taxon>
        <taxon>Metazoa</taxon>
        <taxon>Chordata</taxon>
        <taxon>Craniata</taxon>
        <taxon>Vertebrata</taxon>
        <taxon>Euteleostomi</taxon>
        <taxon>Mammalia</taxon>
        <taxon>Eutheria</taxon>
        <taxon>Euarchontoglires</taxon>
        <taxon>Primates</taxon>
        <taxon>Haplorrhini</taxon>
        <taxon>Catarrhini</taxon>
        <taxon>Hominidae</taxon>
        <taxon>Homo</taxon>
    </lineage>
</organism>
<reference key="1">
    <citation type="journal article" date="2001" name="Biochim. Biophys. Acta">
        <title>Evidence for the transport of neutral as well as cationic amino acids by ATA3, a novel and liver-specific subtype of amino acid transport system A.</title>
        <authorList>
            <person name="Hatanaka T."/>
            <person name="Huang W."/>
            <person name="Ling R."/>
            <person name="Prasad P.D."/>
            <person name="Sugawara M."/>
            <person name="Leibach F.H."/>
            <person name="Ganapathy V."/>
        </authorList>
    </citation>
    <scope>NUCLEOTIDE SEQUENCE [MRNA]</scope>
    <scope>FUNCTION</scope>
    <scope>TRANSPORTER ACTIVITY</scope>
    <scope>BIOPHYSICOCHEMICAL PROPERTIES</scope>
    <scope>TISSUE SPECIFICITY</scope>
    <source>
        <tissue>Hepatoma</tissue>
    </source>
</reference>
<reference key="2">
    <citation type="journal article" date="2001" name="Genomics">
        <title>A novel human amino acid transporter, hNAT3: cDNA cloning, chromosomal mapping, genomic structure, expression, and functional characterization.</title>
        <authorList>
            <person name="Gu S."/>
            <person name="Adan-Rice D."/>
            <person name="Leach R.J."/>
            <person name="Jiang J.X."/>
        </authorList>
    </citation>
    <scope>NUCLEOTIDE SEQUENCE [MRNA]</scope>
    <scope>FUNCTION</scope>
    <scope>TRANSPORTER ACTIVITY</scope>
    <scope>BIOPHYSICOCHEMICAL PROPERTIES</scope>
    <scope>SUBCELLULAR LOCATION</scope>
    <scope>TISSUE SPECIFICITY</scope>
</reference>
<reference key="3">
    <citation type="submission" date="2001-01" db="EMBL/GenBank/DDBJ databases">
        <title>Molecular cloning and characterization of a novel system A amino acid transporter from human liver.</title>
        <authorList>
            <person name="Matsuo H."/>
            <person name="Kanai Y."/>
            <person name="Kim D.K."/>
            <person name="Cha S.H."/>
            <person name="Chairoungdua A."/>
            <person name="Fukuda J."/>
            <person name="Endou H."/>
        </authorList>
    </citation>
    <scope>NUCLEOTIDE SEQUENCE [MRNA]</scope>
    <source>
        <tissue>Liver</tissue>
    </source>
</reference>
<reference key="4">
    <citation type="journal article" date="2004" name="Nat. Genet.">
        <title>Complete sequencing and characterization of 21,243 full-length human cDNAs.</title>
        <authorList>
            <person name="Ota T."/>
            <person name="Suzuki Y."/>
            <person name="Nishikawa T."/>
            <person name="Otsuki T."/>
            <person name="Sugiyama T."/>
            <person name="Irie R."/>
            <person name="Wakamatsu A."/>
            <person name="Hayashi K."/>
            <person name="Sato H."/>
            <person name="Nagai K."/>
            <person name="Kimura K."/>
            <person name="Makita H."/>
            <person name="Sekine M."/>
            <person name="Obayashi M."/>
            <person name="Nishi T."/>
            <person name="Shibahara T."/>
            <person name="Tanaka T."/>
            <person name="Ishii S."/>
            <person name="Yamamoto J."/>
            <person name="Saito K."/>
            <person name="Kawai Y."/>
            <person name="Isono Y."/>
            <person name="Nakamura Y."/>
            <person name="Nagahari K."/>
            <person name="Murakami K."/>
            <person name="Yasuda T."/>
            <person name="Iwayanagi T."/>
            <person name="Wagatsuma M."/>
            <person name="Shiratori A."/>
            <person name="Sudo H."/>
            <person name="Hosoiri T."/>
            <person name="Kaku Y."/>
            <person name="Kodaira H."/>
            <person name="Kondo H."/>
            <person name="Sugawara M."/>
            <person name="Takahashi M."/>
            <person name="Kanda K."/>
            <person name="Yokoi T."/>
            <person name="Furuya T."/>
            <person name="Kikkawa E."/>
            <person name="Omura Y."/>
            <person name="Abe K."/>
            <person name="Kamihara K."/>
            <person name="Katsuta N."/>
            <person name="Sato K."/>
            <person name="Tanikawa M."/>
            <person name="Yamazaki M."/>
            <person name="Ninomiya K."/>
            <person name="Ishibashi T."/>
            <person name="Yamashita H."/>
            <person name="Murakawa K."/>
            <person name="Fujimori K."/>
            <person name="Tanai H."/>
            <person name="Kimata M."/>
            <person name="Watanabe M."/>
            <person name="Hiraoka S."/>
            <person name="Chiba Y."/>
            <person name="Ishida S."/>
            <person name="Ono Y."/>
            <person name="Takiguchi S."/>
            <person name="Watanabe S."/>
            <person name="Yosida M."/>
            <person name="Hotuta T."/>
            <person name="Kusano J."/>
            <person name="Kanehori K."/>
            <person name="Takahashi-Fujii A."/>
            <person name="Hara H."/>
            <person name="Tanase T.-O."/>
            <person name="Nomura Y."/>
            <person name="Togiya S."/>
            <person name="Komai F."/>
            <person name="Hara R."/>
            <person name="Takeuchi K."/>
            <person name="Arita M."/>
            <person name="Imose N."/>
            <person name="Musashino K."/>
            <person name="Yuuki H."/>
            <person name="Oshima A."/>
            <person name="Sasaki N."/>
            <person name="Aotsuka S."/>
            <person name="Yoshikawa Y."/>
            <person name="Matsunawa H."/>
            <person name="Ichihara T."/>
            <person name="Shiohata N."/>
            <person name="Sano S."/>
            <person name="Moriya S."/>
            <person name="Momiyama H."/>
            <person name="Satoh N."/>
            <person name="Takami S."/>
            <person name="Terashima Y."/>
            <person name="Suzuki O."/>
            <person name="Nakagawa S."/>
            <person name="Senoh A."/>
            <person name="Mizoguchi H."/>
            <person name="Goto Y."/>
            <person name="Shimizu F."/>
            <person name="Wakebe H."/>
            <person name="Hishigaki H."/>
            <person name="Watanabe T."/>
            <person name="Sugiyama A."/>
            <person name="Takemoto M."/>
            <person name="Kawakami B."/>
            <person name="Yamazaki M."/>
            <person name="Watanabe K."/>
            <person name="Kumagai A."/>
            <person name="Itakura S."/>
            <person name="Fukuzumi Y."/>
            <person name="Fujimori Y."/>
            <person name="Komiyama M."/>
            <person name="Tashiro H."/>
            <person name="Tanigami A."/>
            <person name="Fujiwara T."/>
            <person name="Ono T."/>
            <person name="Yamada K."/>
            <person name="Fujii Y."/>
            <person name="Ozaki K."/>
            <person name="Hirao M."/>
            <person name="Ohmori Y."/>
            <person name="Kawabata A."/>
            <person name="Hikiji T."/>
            <person name="Kobatake N."/>
            <person name="Inagaki H."/>
            <person name="Ikema Y."/>
            <person name="Okamoto S."/>
            <person name="Okitani R."/>
            <person name="Kawakami T."/>
            <person name="Noguchi S."/>
            <person name="Itoh T."/>
            <person name="Shigeta K."/>
            <person name="Senba T."/>
            <person name="Matsumura K."/>
            <person name="Nakajima Y."/>
            <person name="Mizuno T."/>
            <person name="Morinaga M."/>
            <person name="Sasaki M."/>
            <person name="Togashi T."/>
            <person name="Oyama M."/>
            <person name="Hata H."/>
            <person name="Watanabe M."/>
            <person name="Komatsu T."/>
            <person name="Mizushima-Sugano J."/>
            <person name="Satoh T."/>
            <person name="Shirai Y."/>
            <person name="Takahashi Y."/>
            <person name="Nakagawa K."/>
            <person name="Okumura K."/>
            <person name="Nagase T."/>
            <person name="Nomura N."/>
            <person name="Kikuchi H."/>
            <person name="Masuho Y."/>
            <person name="Yamashita R."/>
            <person name="Nakai K."/>
            <person name="Yada T."/>
            <person name="Nakamura Y."/>
            <person name="Ohara O."/>
            <person name="Isogai T."/>
            <person name="Sugano S."/>
        </authorList>
    </citation>
    <scope>NUCLEOTIDE SEQUENCE [LARGE SCALE MRNA]</scope>
</reference>
<reference key="5">
    <citation type="submission" date="2005-07" db="EMBL/GenBank/DDBJ databases">
        <authorList>
            <person name="Mural R.J."/>
            <person name="Istrail S."/>
            <person name="Sutton G.G."/>
            <person name="Florea L."/>
            <person name="Halpern A.L."/>
            <person name="Mobarry C.M."/>
            <person name="Lippert R."/>
            <person name="Walenz B."/>
            <person name="Shatkay H."/>
            <person name="Dew I."/>
            <person name="Miller J.R."/>
            <person name="Flanigan M.J."/>
            <person name="Edwards N.J."/>
            <person name="Bolanos R."/>
            <person name="Fasulo D."/>
            <person name="Halldorsson B.V."/>
            <person name="Hannenhalli S."/>
            <person name="Turner R."/>
            <person name="Yooseph S."/>
            <person name="Lu F."/>
            <person name="Nusskern D.R."/>
            <person name="Shue B.C."/>
            <person name="Zheng X.H."/>
            <person name="Zhong F."/>
            <person name="Delcher A.L."/>
            <person name="Huson D.H."/>
            <person name="Kravitz S.A."/>
            <person name="Mouchard L."/>
            <person name="Reinert K."/>
            <person name="Remington K.A."/>
            <person name="Clark A.G."/>
            <person name="Waterman M.S."/>
            <person name="Eichler E.E."/>
            <person name="Adams M.D."/>
            <person name="Hunkapiller M.W."/>
            <person name="Myers E.W."/>
            <person name="Venter J.C."/>
        </authorList>
    </citation>
    <scope>NUCLEOTIDE SEQUENCE [LARGE SCALE GENOMIC DNA]</scope>
</reference>
<reference key="6">
    <citation type="journal article" date="2004" name="Genome Res.">
        <title>The status, quality, and expansion of the NIH full-length cDNA project: the Mammalian Gene Collection (MGC).</title>
        <authorList>
            <consortium name="The MGC Project Team"/>
        </authorList>
    </citation>
    <scope>NUCLEOTIDE SEQUENCE [LARGE SCALE MRNA]</scope>
    <source>
        <tissue>Liver</tissue>
    </source>
</reference>
<reference key="7">
    <citation type="journal article" date="2004" name="Pflugers Arch.">
        <title>Sodium-coupled neutral amino acid (System N/A) transporters of the SLC38 gene family.</title>
        <authorList>
            <person name="Mackenzie B."/>
            <person name="Erickson J.D."/>
        </authorList>
    </citation>
    <scope>REVIEW</scope>
    <scope>GENE NOMENCLATURE</scope>
</reference>
<reference key="8">
    <citation type="journal article" date="2006" name="Am. J. Physiol.">
        <title>SNAT4 isoform of system A amino acid transporter is expressed in human placenta.</title>
        <authorList>
            <person name="Desforges M."/>
            <person name="Lacey H.A."/>
            <person name="Glazier J.D."/>
            <person name="Greenwood S.L."/>
            <person name="Mynett K.J."/>
            <person name="Speake P.F."/>
            <person name="Sibley C.P."/>
        </authorList>
    </citation>
    <scope>TISSUE SPECIFICITY</scope>
    <scope>SUBCELLULAR LOCATION</scope>
</reference>
<reference key="9">
    <citation type="journal article" date="2009" name="J. Physiol. (Lond.)">
        <title>The SNAT4 isoform of the system A amino acid transporter is functional in human placental microvillous plasma membrane.</title>
        <authorList>
            <person name="Desforges M."/>
            <person name="Mynett K.J."/>
            <person name="Jones R.L."/>
            <person name="Greenwood S.L."/>
            <person name="Westwood M."/>
            <person name="Sibley C.P."/>
            <person name="Glazier J.D."/>
        </authorList>
    </citation>
    <scope>FUNCTION</scope>
    <scope>SUBCELLULAR LOCATION</scope>
    <scope>TISSUE SPECIFICITY</scope>
</reference>
<reference key="10">
    <citation type="journal article" date="2011" name="J. Biol. Chem.">
        <title>Membrane topological structure of neutral system N/A amino acid transporter 4 (SNAT4) protein.</title>
        <authorList>
            <person name="Shi Q."/>
            <person name="Padmanabhan R."/>
            <person name="Villegas C.J."/>
            <person name="Gu S."/>
            <person name="Jiang J.X."/>
        </authorList>
    </citation>
    <scope>TOPOLOGY</scope>
    <scope>GLYCOSYLATION AT ASN-260 AND ASN-264</scope>
</reference>
<reference key="11">
    <citation type="journal article" date="2021" name="Front. Mol. Biosci.">
        <title>A GC-MS/Single-Cell Method to Evaluate Membrane Transporter Substrate Specificity and Signaling.</title>
        <authorList>
            <person name="Fairweather S.J."/>
            <person name="Okada S."/>
            <person name="Gauthier-Coles G."/>
            <person name="Javed K."/>
            <person name="Broeer A."/>
            <person name="Broeer S."/>
        </authorList>
    </citation>
    <scope>FUNCTION</scope>
    <scope>TRANSPORTER ACTIVITY</scope>
</reference>
<reference key="12">
    <citation type="journal article" date="2018" name="Am. J. Hum. Genet.">
        <title>De Novo Truncating Mutations in WASF1 Cause Intellectual Disability with Seizures.</title>
        <authorList>
            <consortium name="NIHR BioResource"/>
            <consortium name="Care4Rare Canada Consortium"/>
            <person name="Ito Y."/>
            <person name="Carss K.J."/>
            <person name="Duarte S.T."/>
            <person name="Hartley T."/>
            <person name="Keren B."/>
            <person name="Kurian M.A."/>
            <person name="Marey I."/>
            <person name="Charles P."/>
            <person name="Mendonca C."/>
            <person name="Nava C."/>
            <person name="Pfundt R."/>
            <person name="Sanchis-Juan A."/>
            <person name="van Bokhoven H."/>
            <person name="van Essen A."/>
            <person name="van Ravenswaaij-Arts C."/>
            <person name="Boycott K.M."/>
            <person name="Kernohan K.D."/>
            <person name="Dyack S."/>
            <person name="Raymond F.L."/>
        </authorList>
    </citation>
    <scope>VARIANT 446-ARG--HIS-547 DEL</scope>
</reference>
<gene>
    <name evidence="19" type="primary">SLC38A4</name>
    <name evidence="12" type="synonym">ATA3</name>
    <name evidence="13" type="synonym">NAT3</name>
    <name evidence="14" type="synonym">SNAT4</name>
</gene>
<accession>Q969I6</accession>
<accession>A8K553</accession>
<keyword id="KW-0029">Amino-acid transport</keyword>
<keyword id="KW-1003">Cell membrane</keyword>
<keyword id="KW-0966">Cell projection</keyword>
<keyword id="KW-1015">Disulfide bond</keyword>
<keyword id="KW-0325">Glycoprotein</keyword>
<keyword id="KW-0406">Ion transport</keyword>
<keyword id="KW-0472">Membrane</keyword>
<keyword id="KW-0597">Phosphoprotein</keyword>
<keyword id="KW-1267">Proteomics identification</keyword>
<keyword id="KW-1185">Reference proteome</keyword>
<keyword id="KW-0915">Sodium</keyword>
<keyword id="KW-0739">Sodium transport</keyword>
<keyword id="KW-0769">Symport</keyword>
<keyword id="KW-0812">Transmembrane</keyword>
<keyword id="KW-1133">Transmembrane helix</keyword>
<keyword id="KW-0813">Transport</keyword>
<sequence>MDPMELRNVNIEPDDESSSGESAPDSYIGIGNSEKAAMSSQFANEDTESQKFLTNGFLGKKKLADYADEHHPGTTSFGMSSFNLSNAIMGSGILGLSYAMANTGIILFIIMLLAVAILSLYSVHLLLKTAKEGGSLIYEKLGEKAFGWPGKIGAFVSITMQNIGAMSSYLFIIKYELPEVIRAFMGLEENTGEWYLNGNYLIIFVSVGIILPLSLLKNLGYLGYTSGFSLTCMVFFVSVVIYKKFQIPCPLPVLDHSVGNLSFNNTLPMHVVMLPNNSESSDVNFMMDYTHRNPAGLDENQAKGSLHDSGVEYEAHSDDKCEPKYFVFNSRTAYAIPILVFAFVCHPEVLPIYSELKDRSRRKMQTVSNISITGMLVMYLLAALFGYLTFYGEVEDELLHAYSKVYTLDIPLLMVRLAVLVAVTLTVPIVLFPIRTSVITLLFPKRPFSWIRHFLIAAVLIALNNVLVILVPTIKYIFGFIGASSATMLIFILPAVFYLKLVKKETFRSPQKVGALIFLVVGIFFMIGSMALIIIDWIYDPPNSKHH</sequence>
<feature type="chain" id="PRO_0000247860" description="Sodium-coupled neutral amino acid transporter 4">
    <location>
        <begin position="1"/>
        <end position="547"/>
    </location>
</feature>
<feature type="topological domain" description="Extracellular" evidence="3 17">
    <location>
        <begin position="1"/>
        <end position="104"/>
    </location>
</feature>
<feature type="transmembrane region" description="Helical" evidence="3">
    <location>
        <begin position="105"/>
        <end position="125"/>
    </location>
</feature>
<feature type="topological domain" description="Cytoplasmic" evidence="3 17">
    <location>
        <begin position="126"/>
        <end position="151"/>
    </location>
</feature>
<feature type="transmembrane region" description="Helical" evidence="3">
    <location>
        <begin position="152"/>
        <end position="172"/>
    </location>
</feature>
<feature type="topological domain" description="Extracellular" evidence="3 17">
    <location>
        <begin position="173"/>
        <end position="195"/>
    </location>
</feature>
<feature type="transmembrane region" description="Helical" evidence="3">
    <location>
        <begin position="196"/>
        <end position="216"/>
    </location>
</feature>
<feature type="topological domain" description="Cytoplasmic" evidence="3 17">
    <location>
        <begin position="217"/>
        <end position="220"/>
    </location>
</feature>
<feature type="transmembrane region" description="Helical" evidence="3">
    <location>
        <begin position="221"/>
        <end position="241"/>
    </location>
</feature>
<feature type="topological domain" description="Extracellular" evidence="3 17">
    <location>
        <begin position="242"/>
        <end position="332"/>
    </location>
</feature>
<feature type="transmembrane region" description="Helical" evidence="3">
    <location>
        <begin position="333"/>
        <end position="353"/>
    </location>
</feature>
<feature type="topological domain" description="Cytoplasmic" evidence="3 17">
    <location>
        <begin position="354"/>
        <end position="369"/>
    </location>
</feature>
<feature type="transmembrane region" description="Helical" evidence="3">
    <location>
        <begin position="370"/>
        <end position="390"/>
    </location>
</feature>
<feature type="topological domain" description="Extracellular" evidence="3 17">
    <location>
        <begin position="391"/>
        <end position="411"/>
    </location>
</feature>
<feature type="transmembrane region" description="Helical" evidence="3">
    <location>
        <begin position="412"/>
        <end position="432"/>
    </location>
</feature>
<feature type="topological domain" description="Cytoplasmic" evidence="3 17">
    <location>
        <begin position="433"/>
        <end position="453"/>
    </location>
</feature>
<feature type="transmembrane region" description="Helical" evidence="3">
    <location>
        <begin position="454"/>
        <end position="474"/>
    </location>
</feature>
<feature type="topological domain" description="Extracellular" evidence="3">
    <location>
        <begin position="475"/>
        <end position="476"/>
    </location>
</feature>
<feature type="transmembrane region" description="Helical" evidence="3">
    <location>
        <begin position="477"/>
        <end position="497"/>
    </location>
</feature>
<feature type="topological domain" description="Cytoplasmic" evidence="3 17">
    <location>
        <begin position="498"/>
        <end position="514"/>
    </location>
</feature>
<feature type="transmembrane region" description="Helical" evidence="3">
    <location>
        <begin position="515"/>
        <end position="535"/>
    </location>
</feature>
<feature type="topological domain" description="Extracellular" evidence="3 17">
    <location>
        <begin position="536"/>
        <end position="547"/>
    </location>
</feature>
<feature type="region of interest" description="Disordered" evidence="4">
    <location>
        <begin position="1"/>
        <end position="30"/>
    </location>
</feature>
<feature type="site" description="Influences on amino acid transport capacity" evidence="1">
    <location>
        <position position="232"/>
    </location>
</feature>
<feature type="modified residue" description="Phosphoserine" evidence="2">
    <location>
        <position position="49"/>
    </location>
</feature>
<feature type="glycosylation site" description="N-linked (GlcNAc...) asparagine" evidence="9">
    <location>
        <position position="260"/>
    </location>
</feature>
<feature type="glycosylation site" description="N-linked (GlcNAc...) asparagine" evidence="9">
    <location>
        <position position="264"/>
    </location>
</feature>
<feature type="glycosylation site" description="N-linked (GlcNAc...) asparagine" evidence="3">
    <location>
        <position position="276"/>
    </location>
</feature>
<feature type="disulfide bond" evidence="1">
    <location>
        <begin position="249"/>
        <end position="321"/>
    </location>
</feature>
<feature type="sequence variant" id="VAR_048123" description="In dbSNP:rs2429467.">
    <original>G</original>
    <variation>R</variation>
    <location>
        <position position="29"/>
    </location>
</feature>
<feature type="sequence variant" id="VAR_048124" description="In dbSNP:rs11183610.">
    <original>T</original>
    <variation>M</variation>
    <location>
        <position position="366"/>
    </location>
</feature>
<feature type="sequence variant" id="VAR_083479" evidence="10">
    <location>
        <begin position="446"/>
        <end position="547"/>
    </location>
</feature>